<accession>B0KS99</accession>
<organism>
    <name type="scientific">Pseudomonas putida (strain GB-1)</name>
    <dbReference type="NCBI Taxonomy" id="76869"/>
    <lineage>
        <taxon>Bacteria</taxon>
        <taxon>Pseudomonadati</taxon>
        <taxon>Pseudomonadota</taxon>
        <taxon>Gammaproteobacteria</taxon>
        <taxon>Pseudomonadales</taxon>
        <taxon>Pseudomonadaceae</taxon>
        <taxon>Pseudomonas</taxon>
    </lineage>
</organism>
<protein>
    <recommendedName>
        <fullName evidence="1">Small ribosomal subunit protein uS2</fullName>
    </recommendedName>
    <alternativeName>
        <fullName evidence="2">30S ribosomal protein S2</fullName>
    </alternativeName>
</protein>
<keyword id="KW-0687">Ribonucleoprotein</keyword>
<keyword id="KW-0689">Ribosomal protein</keyword>
<feature type="chain" id="PRO_1000078893" description="Small ribosomal subunit protein uS2">
    <location>
        <begin position="1"/>
        <end position="245"/>
    </location>
</feature>
<evidence type="ECO:0000255" key="1">
    <source>
        <dbReference type="HAMAP-Rule" id="MF_00291"/>
    </source>
</evidence>
<evidence type="ECO:0000305" key="2"/>
<name>RS2_PSEPG</name>
<gene>
    <name evidence="1" type="primary">rpsB</name>
    <name type="ordered locus">PputGB1_1146</name>
</gene>
<reference key="1">
    <citation type="submission" date="2008-01" db="EMBL/GenBank/DDBJ databases">
        <title>Complete sequence of Pseudomonas putida GB-1.</title>
        <authorList>
            <consortium name="US DOE Joint Genome Institute"/>
            <person name="Copeland A."/>
            <person name="Lucas S."/>
            <person name="Lapidus A."/>
            <person name="Barry K."/>
            <person name="Glavina del Rio T."/>
            <person name="Dalin E."/>
            <person name="Tice H."/>
            <person name="Pitluck S."/>
            <person name="Bruce D."/>
            <person name="Goodwin L."/>
            <person name="Chertkov O."/>
            <person name="Brettin T."/>
            <person name="Detter J.C."/>
            <person name="Han C."/>
            <person name="Kuske C.R."/>
            <person name="Schmutz J."/>
            <person name="Larimer F."/>
            <person name="Land M."/>
            <person name="Hauser L."/>
            <person name="Kyrpides N."/>
            <person name="Kim E."/>
            <person name="McCarthy J.K."/>
            <person name="Richardson P."/>
        </authorList>
    </citation>
    <scope>NUCLEOTIDE SEQUENCE [LARGE SCALE GENOMIC DNA]</scope>
    <source>
        <strain>GB-1</strain>
    </source>
</reference>
<sequence>MSQVNMRDMLKAGVHFGHQTRYWNPKMGKYIFGARNKIHIINLEKTLPMFNDALAFVERLAQGKNKIMFVGTKRSAGKIVAEQAARAGSPYVDHRWLGGMLTNYKTIRASIKRLRDLETQAEDGTFAKLTKKEALMRSRDLEKLDRSLGGIKDMGGLPDALFVIDVDHERIAITEANKLGIPVIGVVDTNSSPEGVDYIIPGNDDAIRAIELYMTSMADAIIRGRNNVAGGTEVYVEEAAAPAAE</sequence>
<proteinExistence type="inferred from homology"/>
<comment type="similarity">
    <text evidence="1">Belongs to the universal ribosomal protein uS2 family.</text>
</comment>
<dbReference type="EMBL" id="CP000926">
    <property type="protein sequence ID" value="ABY97054.1"/>
    <property type="molecule type" value="Genomic_DNA"/>
</dbReference>
<dbReference type="RefSeq" id="WP_012270834.1">
    <property type="nucleotide sequence ID" value="NC_010322.1"/>
</dbReference>
<dbReference type="SMR" id="B0KS99"/>
<dbReference type="KEGG" id="ppg:PputGB1_1146"/>
<dbReference type="eggNOG" id="COG0052">
    <property type="taxonomic scope" value="Bacteria"/>
</dbReference>
<dbReference type="HOGENOM" id="CLU_040318_1_0_6"/>
<dbReference type="Proteomes" id="UP000002157">
    <property type="component" value="Chromosome"/>
</dbReference>
<dbReference type="GO" id="GO:0022627">
    <property type="term" value="C:cytosolic small ribosomal subunit"/>
    <property type="evidence" value="ECO:0007669"/>
    <property type="project" value="TreeGrafter"/>
</dbReference>
<dbReference type="GO" id="GO:0003735">
    <property type="term" value="F:structural constituent of ribosome"/>
    <property type="evidence" value="ECO:0007669"/>
    <property type="project" value="InterPro"/>
</dbReference>
<dbReference type="GO" id="GO:0006412">
    <property type="term" value="P:translation"/>
    <property type="evidence" value="ECO:0007669"/>
    <property type="project" value="UniProtKB-UniRule"/>
</dbReference>
<dbReference type="CDD" id="cd01425">
    <property type="entry name" value="RPS2"/>
    <property type="match status" value="1"/>
</dbReference>
<dbReference type="FunFam" id="1.10.287.610:FF:000001">
    <property type="entry name" value="30S ribosomal protein S2"/>
    <property type="match status" value="1"/>
</dbReference>
<dbReference type="Gene3D" id="3.40.50.10490">
    <property type="entry name" value="Glucose-6-phosphate isomerase like protein, domain 1"/>
    <property type="match status" value="1"/>
</dbReference>
<dbReference type="Gene3D" id="1.10.287.610">
    <property type="entry name" value="Helix hairpin bin"/>
    <property type="match status" value="1"/>
</dbReference>
<dbReference type="HAMAP" id="MF_00291_B">
    <property type="entry name" value="Ribosomal_uS2_B"/>
    <property type="match status" value="1"/>
</dbReference>
<dbReference type="InterPro" id="IPR001865">
    <property type="entry name" value="Ribosomal_uS2"/>
</dbReference>
<dbReference type="InterPro" id="IPR005706">
    <property type="entry name" value="Ribosomal_uS2_bac/mit/plastid"/>
</dbReference>
<dbReference type="InterPro" id="IPR018130">
    <property type="entry name" value="Ribosomal_uS2_CS"/>
</dbReference>
<dbReference type="InterPro" id="IPR023591">
    <property type="entry name" value="Ribosomal_uS2_flav_dom_sf"/>
</dbReference>
<dbReference type="NCBIfam" id="TIGR01011">
    <property type="entry name" value="rpsB_bact"/>
    <property type="match status" value="1"/>
</dbReference>
<dbReference type="PANTHER" id="PTHR12534">
    <property type="entry name" value="30S RIBOSOMAL PROTEIN S2 PROKARYOTIC AND ORGANELLAR"/>
    <property type="match status" value="1"/>
</dbReference>
<dbReference type="PANTHER" id="PTHR12534:SF0">
    <property type="entry name" value="SMALL RIBOSOMAL SUBUNIT PROTEIN US2M"/>
    <property type="match status" value="1"/>
</dbReference>
<dbReference type="Pfam" id="PF00318">
    <property type="entry name" value="Ribosomal_S2"/>
    <property type="match status" value="1"/>
</dbReference>
<dbReference type="PRINTS" id="PR00395">
    <property type="entry name" value="RIBOSOMALS2"/>
</dbReference>
<dbReference type="SUPFAM" id="SSF52313">
    <property type="entry name" value="Ribosomal protein S2"/>
    <property type="match status" value="1"/>
</dbReference>
<dbReference type="PROSITE" id="PS00962">
    <property type="entry name" value="RIBOSOMAL_S2_1"/>
    <property type="match status" value="1"/>
</dbReference>
<dbReference type="PROSITE" id="PS00963">
    <property type="entry name" value="RIBOSOMAL_S2_2"/>
    <property type="match status" value="1"/>
</dbReference>